<gene>
    <name evidence="1" type="primary">rutB</name>
    <name type="ordered locus">Ctu_15920</name>
</gene>
<reference key="1">
    <citation type="journal article" date="2011" name="J. Bacteriol.">
        <title>Complete genome sequence of Cronobacter turicensis LMG 23827, a food-borne pathogen causing deaths in neonates.</title>
        <authorList>
            <person name="Stephan R."/>
            <person name="Lehner A."/>
            <person name="Tischler P."/>
            <person name="Rattei T."/>
        </authorList>
    </citation>
    <scope>NUCLEOTIDE SEQUENCE [LARGE SCALE GENOMIC DNA]</scope>
    <source>
        <strain>DSM 18703 / CCUG 55852 / LMG 23827 / z3032</strain>
    </source>
</reference>
<dbReference type="EC" id="3.5.1.110" evidence="1"/>
<dbReference type="EMBL" id="FN543093">
    <property type="protein sequence ID" value="CBA29795.1"/>
    <property type="molecule type" value="Genomic_DNA"/>
</dbReference>
<dbReference type="SMR" id="C9Y0S6"/>
<dbReference type="KEGG" id="ctu:CTU_15920"/>
<dbReference type="PATRIC" id="fig|693216.3.peg.1517"/>
<dbReference type="HOGENOM" id="CLU_068979_8_0_6"/>
<dbReference type="Proteomes" id="UP000002069">
    <property type="component" value="Chromosome"/>
</dbReference>
<dbReference type="GO" id="GO:0016811">
    <property type="term" value="F:hydrolase activity, acting on carbon-nitrogen (but not peptide) bonds, in linear amides"/>
    <property type="evidence" value="ECO:0007669"/>
    <property type="project" value="UniProtKB-UniRule"/>
</dbReference>
<dbReference type="GO" id="GO:0019740">
    <property type="term" value="P:nitrogen utilization"/>
    <property type="evidence" value="ECO:0007669"/>
    <property type="project" value="UniProtKB-UniRule"/>
</dbReference>
<dbReference type="GO" id="GO:0006212">
    <property type="term" value="P:uracil catabolic process"/>
    <property type="evidence" value="ECO:0007669"/>
    <property type="project" value="UniProtKB-UniRule"/>
</dbReference>
<dbReference type="CDD" id="cd00431">
    <property type="entry name" value="cysteine_hydrolases"/>
    <property type="match status" value="1"/>
</dbReference>
<dbReference type="Gene3D" id="3.40.50.850">
    <property type="entry name" value="Isochorismatase-like"/>
    <property type="match status" value="1"/>
</dbReference>
<dbReference type="HAMAP" id="MF_00830">
    <property type="entry name" value="RutB"/>
    <property type="match status" value="1"/>
</dbReference>
<dbReference type="InterPro" id="IPR000868">
    <property type="entry name" value="Isochorismatase-like_dom"/>
</dbReference>
<dbReference type="InterPro" id="IPR050272">
    <property type="entry name" value="Isochorismatase-like_hydrls"/>
</dbReference>
<dbReference type="InterPro" id="IPR036380">
    <property type="entry name" value="Isochorismatase-like_sf"/>
</dbReference>
<dbReference type="InterPro" id="IPR019916">
    <property type="entry name" value="RutB"/>
</dbReference>
<dbReference type="NCBIfam" id="TIGR03614">
    <property type="entry name" value="RutB"/>
    <property type="match status" value="1"/>
</dbReference>
<dbReference type="PANTHER" id="PTHR43540:SF6">
    <property type="entry name" value="ISOCHORISMATASE-LIKE DOMAIN-CONTAINING PROTEIN"/>
    <property type="match status" value="1"/>
</dbReference>
<dbReference type="PANTHER" id="PTHR43540">
    <property type="entry name" value="PEROXYUREIDOACRYLATE/UREIDOACRYLATE AMIDOHYDROLASE-RELATED"/>
    <property type="match status" value="1"/>
</dbReference>
<dbReference type="Pfam" id="PF00857">
    <property type="entry name" value="Isochorismatase"/>
    <property type="match status" value="1"/>
</dbReference>
<dbReference type="SUPFAM" id="SSF52499">
    <property type="entry name" value="Isochorismatase-like hydrolases"/>
    <property type="match status" value="1"/>
</dbReference>
<sequence length="232" mass="25387">MNAVNLMARPEALTFAPEQSALIVVDMQNAYASQGGYLDLAGFDVSTTAPVIENIKTAVAAAREAGMTIVWFQNGWDSDYLEAGGPGSPNFHKSNALKTMRRRPELHGKLLAKGGWDYQLVDELTPLPGDIVLPKPRYSGFFNTPLDSMLRARNIRHLVFTGIATNVCVESTLRDGFFLEYFGVVLEDATHQAGPPFAQQAALFNIETFFGWVSDVQRFCDALSPAALARIA</sequence>
<protein>
    <recommendedName>
        <fullName evidence="1">Ureidoacrylate amidohydrolase RutB</fullName>
        <ecNumber evidence="1">3.5.1.110</ecNumber>
    </recommendedName>
</protein>
<keyword id="KW-0378">Hydrolase</keyword>
<evidence type="ECO:0000255" key="1">
    <source>
        <dbReference type="HAMAP-Rule" id="MF_00830"/>
    </source>
</evidence>
<name>RUTB_CROTZ</name>
<accession>C9Y0S6</accession>
<feature type="chain" id="PRO_0000402652" description="Ureidoacrylate amidohydrolase RutB">
    <location>
        <begin position="1"/>
        <end position="232"/>
    </location>
</feature>
<feature type="active site" description="Proton acceptor" evidence="1">
    <location>
        <position position="26"/>
    </location>
</feature>
<feature type="active site" evidence="1">
    <location>
        <position position="135"/>
    </location>
</feature>
<feature type="active site" description="Nucleophile" evidence="1">
    <location>
        <position position="168"/>
    </location>
</feature>
<comment type="function">
    <text evidence="1">Hydrolyzes ureidoacrylate to form aminoacrylate and carbamate. The carbamate hydrolyzes spontaneously, thereby releasing one of the nitrogen atoms of the pyrimidine ring as ammonia and one of its carbon atoms as CO2.</text>
</comment>
<comment type="catalytic activity">
    <reaction evidence="1">
        <text>(Z)-3-ureidoacrylate + H2O + H(+) = (Z)-3-aminoacrylate + NH4(+) + CO2</text>
        <dbReference type="Rhea" id="RHEA:42624"/>
        <dbReference type="ChEBI" id="CHEBI:15377"/>
        <dbReference type="ChEBI" id="CHEBI:15378"/>
        <dbReference type="ChEBI" id="CHEBI:16526"/>
        <dbReference type="ChEBI" id="CHEBI:28938"/>
        <dbReference type="ChEBI" id="CHEBI:59891"/>
        <dbReference type="ChEBI" id="CHEBI:59894"/>
        <dbReference type="EC" id="3.5.1.110"/>
    </reaction>
</comment>
<comment type="catalytic activity">
    <reaction evidence="1">
        <text>(Z)-3-ureidoacrylate + H2O = (Z)-3-aminoacrylate + carbamate + H(+)</text>
        <dbReference type="Rhea" id="RHEA:31603"/>
        <dbReference type="ChEBI" id="CHEBI:13941"/>
        <dbReference type="ChEBI" id="CHEBI:15377"/>
        <dbReference type="ChEBI" id="CHEBI:15378"/>
        <dbReference type="ChEBI" id="CHEBI:59891"/>
        <dbReference type="ChEBI" id="CHEBI:59894"/>
    </reaction>
</comment>
<comment type="catalytic activity">
    <reaction evidence="1">
        <text>(Z)-2-methylureidoacrylate + H2O + H(+) = (Z)-2-methylaminoacrylate + NH4(+) + CO2</text>
        <dbReference type="Rhea" id="RHEA:42620"/>
        <dbReference type="ChEBI" id="CHEBI:15377"/>
        <dbReference type="ChEBI" id="CHEBI:15378"/>
        <dbReference type="ChEBI" id="CHEBI:16526"/>
        <dbReference type="ChEBI" id="CHEBI:28938"/>
        <dbReference type="ChEBI" id="CHEBI:143783"/>
        <dbReference type="ChEBI" id="CHEBI:145735"/>
        <dbReference type="EC" id="3.5.1.110"/>
    </reaction>
</comment>
<comment type="similarity">
    <text evidence="1">Belongs to the isochorismatase family. RutB subfamily.</text>
</comment>
<organism>
    <name type="scientific">Cronobacter turicensis (strain DSM 18703 / CCUG 55852 / LMG 23827 / z3032)</name>
    <dbReference type="NCBI Taxonomy" id="693216"/>
    <lineage>
        <taxon>Bacteria</taxon>
        <taxon>Pseudomonadati</taxon>
        <taxon>Pseudomonadota</taxon>
        <taxon>Gammaproteobacteria</taxon>
        <taxon>Enterobacterales</taxon>
        <taxon>Enterobacteriaceae</taxon>
        <taxon>Cronobacter</taxon>
    </lineage>
</organism>
<proteinExistence type="inferred from homology"/>